<gene>
    <name type="primary">dfa5</name>
    <name type="ordered locus">all0177</name>
</gene>
<organism>
    <name type="scientific">Nostoc sp. (strain PCC 7120 / SAG 25.82 / UTEX 2576)</name>
    <dbReference type="NCBI Taxonomy" id="103690"/>
    <lineage>
        <taxon>Bacteria</taxon>
        <taxon>Bacillati</taxon>
        <taxon>Cyanobacteriota</taxon>
        <taxon>Cyanophyceae</taxon>
        <taxon>Nostocales</taxon>
        <taxon>Nostocaceae</taxon>
        <taxon>Nostoc</taxon>
    </lineage>
</organism>
<protein>
    <recommendedName>
        <fullName>Putative diflavin flavoprotein A 5</fullName>
        <ecNumber>1.-.-.-</ecNumber>
    </recommendedName>
</protein>
<sequence>MSDSKPRDVQVLPIATNTKVLRARSWSRLRFEIEYALERGTTSNSYVIEGDKTAIIDPPVESFMKIYLEALQQTVNLKKLDYVILGHFSPNRIPTFKALLELAPQITFVCSLPAAGDLRAAFPDDNLNILPMRGKETLDLGKGHVLKFLPIPSPRWPAGLCTYDVQTQILYTDKIFGAHICGDDVFDDNWESFKEDQRYYFNCLMAPHAIHVEAALEKISDLQVRLYAVGHGPLVRTSLIALTQAYADWSKAQKDREISVALLYASAYGNTATIARAIALGLTKGGVAVKSINCEFATPEEIQTNLEQVDGFLIGSPTIGGHAPTPINTALGIVLKVGDNNKLAGVFGSYGWSGEALDMIEGKLRDAGYRFGLDTLKVKFKPDDVTLKFCEEVGTDFAQTLKKAKKVRVPQQAATPVEQAVGRIVGSVCVITAKQGDVSTGMLGSWVSQATFNPPGLTVAIAKERAIESLMYPGGKFALNILSEGNHLEYMKHFRKNFAPGEDRFANFTTTEADNGCTVLADALAYVECSVDQRLECGDHWVVYATVDNGKLLKPDDVTAINHRKTGNHY</sequence>
<name>DFA5_NOSS1</name>
<dbReference type="EC" id="1.-.-.-"/>
<dbReference type="EMBL" id="BA000019">
    <property type="protein sequence ID" value="BAB77701.1"/>
    <property type="molecule type" value="Genomic_DNA"/>
</dbReference>
<dbReference type="PIR" id="AI1828">
    <property type="entry name" value="AI1828"/>
</dbReference>
<dbReference type="RefSeq" id="WP_010994354.1">
    <property type="nucleotide sequence ID" value="NZ_RSCN01000026.1"/>
</dbReference>
<dbReference type="PDB" id="4FEK">
    <property type="method" value="X-ray"/>
    <property type="resolution" value="2.00 A"/>
    <property type="chains" value="A/B=1-254"/>
</dbReference>
<dbReference type="PDBsum" id="4FEK"/>
<dbReference type="SMR" id="Q8Z0C1"/>
<dbReference type="STRING" id="103690.gene:10492184"/>
<dbReference type="KEGG" id="ana:all0177"/>
<dbReference type="eggNOG" id="COG0426">
    <property type="taxonomic scope" value="Bacteria"/>
</dbReference>
<dbReference type="eggNOG" id="COG1853">
    <property type="taxonomic scope" value="Bacteria"/>
</dbReference>
<dbReference type="OrthoDB" id="9807946at2"/>
<dbReference type="EvolutionaryTrace" id="Q8Z0C1"/>
<dbReference type="Proteomes" id="UP000002483">
    <property type="component" value="Chromosome"/>
</dbReference>
<dbReference type="GO" id="GO:0009055">
    <property type="term" value="F:electron transfer activity"/>
    <property type="evidence" value="ECO:0007669"/>
    <property type="project" value="InterPro"/>
</dbReference>
<dbReference type="GO" id="GO:0010181">
    <property type="term" value="F:FMN binding"/>
    <property type="evidence" value="ECO:0007669"/>
    <property type="project" value="InterPro"/>
</dbReference>
<dbReference type="GO" id="GO:0016646">
    <property type="term" value="F:oxidoreductase activity, acting on the CH-NH group of donors, NAD or NADP as acceptor"/>
    <property type="evidence" value="ECO:0007669"/>
    <property type="project" value="UniProtKB-ARBA"/>
</dbReference>
<dbReference type="CDD" id="cd07709">
    <property type="entry name" value="flavodiiron_proteins_MBL-fold"/>
    <property type="match status" value="1"/>
</dbReference>
<dbReference type="Gene3D" id="3.40.50.360">
    <property type="match status" value="1"/>
</dbReference>
<dbReference type="Gene3D" id="2.30.110.10">
    <property type="entry name" value="Electron Transport, Fmn-binding Protein, Chain A"/>
    <property type="match status" value="1"/>
</dbReference>
<dbReference type="Gene3D" id="3.60.15.10">
    <property type="entry name" value="Ribonuclease Z/Hydroxyacylglutathione hydrolase-like"/>
    <property type="match status" value="1"/>
</dbReference>
<dbReference type="InterPro" id="IPR002563">
    <property type="entry name" value="Flavin_Rdtase-like_dom"/>
</dbReference>
<dbReference type="InterPro" id="IPR008254">
    <property type="entry name" value="Flavodoxin/NO_synth"/>
</dbReference>
<dbReference type="InterPro" id="IPR001226">
    <property type="entry name" value="Flavodoxin_CS"/>
</dbReference>
<dbReference type="InterPro" id="IPR029039">
    <property type="entry name" value="Flavoprotein-like_sf"/>
</dbReference>
<dbReference type="InterPro" id="IPR001279">
    <property type="entry name" value="Metallo-B-lactamas"/>
</dbReference>
<dbReference type="InterPro" id="IPR051285">
    <property type="entry name" value="NADH_oxidoreductase_modular"/>
</dbReference>
<dbReference type="InterPro" id="IPR045761">
    <property type="entry name" value="ODP_dom"/>
</dbReference>
<dbReference type="InterPro" id="IPR036866">
    <property type="entry name" value="RibonucZ/Hydroxyglut_hydro"/>
</dbReference>
<dbReference type="InterPro" id="IPR012349">
    <property type="entry name" value="Split_barrel_FMN-bd"/>
</dbReference>
<dbReference type="PANTHER" id="PTHR32145">
    <property type="entry name" value="DIFLAVIN FLAVOPROTEIN A 2-RELATED"/>
    <property type="match status" value="1"/>
</dbReference>
<dbReference type="PANTHER" id="PTHR32145:SF32">
    <property type="entry name" value="DIFLAVIN FLAVOPROTEIN A 4-RELATED"/>
    <property type="match status" value="1"/>
</dbReference>
<dbReference type="Pfam" id="PF01613">
    <property type="entry name" value="Flavin_Reduct"/>
    <property type="match status" value="1"/>
</dbReference>
<dbReference type="Pfam" id="PF00258">
    <property type="entry name" value="Flavodoxin_1"/>
    <property type="match status" value="1"/>
</dbReference>
<dbReference type="Pfam" id="PF19583">
    <property type="entry name" value="ODP"/>
    <property type="match status" value="1"/>
</dbReference>
<dbReference type="SMART" id="SM00903">
    <property type="entry name" value="Flavin_Reduct"/>
    <property type="match status" value="1"/>
</dbReference>
<dbReference type="SMART" id="SM00849">
    <property type="entry name" value="Lactamase_B"/>
    <property type="match status" value="1"/>
</dbReference>
<dbReference type="SUPFAM" id="SSF52218">
    <property type="entry name" value="Flavoproteins"/>
    <property type="match status" value="1"/>
</dbReference>
<dbReference type="SUPFAM" id="SSF50475">
    <property type="entry name" value="FMN-binding split barrel"/>
    <property type="match status" value="1"/>
</dbReference>
<dbReference type="SUPFAM" id="SSF56281">
    <property type="entry name" value="Metallo-hydrolase/oxidoreductase"/>
    <property type="match status" value="1"/>
</dbReference>
<dbReference type="PROSITE" id="PS00201">
    <property type="entry name" value="FLAVODOXIN"/>
    <property type="match status" value="1"/>
</dbReference>
<dbReference type="PROSITE" id="PS50902">
    <property type="entry name" value="FLAVODOXIN_LIKE"/>
    <property type="match status" value="1"/>
</dbReference>
<comment type="function">
    <text evidence="1">Mediates electron transfer from NADH to oxygen, reducing it to water. This modular protein has 3 redox cofactors, in other organisms the same activity requires 2 or 3 proteins (By similarity).</text>
</comment>
<comment type="cofactor">
    <cofactor>
        <name>Fe cation</name>
        <dbReference type="ChEBI" id="CHEBI:24875"/>
    </cofactor>
    <text>Binds 2 iron ions per subunit.</text>
</comment>
<comment type="miscellaneous">
    <text evidence="1">By homology with NorV in E.coli, may be involved in nitric oxide detoxification.</text>
</comment>
<comment type="similarity">
    <text evidence="3">In the N-terminal section; belongs to the zinc metallo-hydrolase group 3 family.</text>
</comment>
<comment type="similarity">
    <text evidence="3">In the C-terminal section; belongs to the flavodoxin reductase family.</text>
</comment>
<proteinExistence type="evidence at protein level"/>
<keyword id="KW-0002">3D-structure</keyword>
<keyword id="KW-0249">Electron transport</keyword>
<keyword id="KW-0560">Oxidoreductase</keyword>
<keyword id="KW-1185">Reference proteome</keyword>
<keyword id="KW-0813">Transport</keyword>
<accession>Q8Z0C1</accession>
<feature type="chain" id="PRO_0000216797" description="Putative diflavin flavoprotein A 5">
    <location>
        <begin position="1"/>
        <end position="570"/>
    </location>
</feature>
<feature type="domain" description="Flavodoxin-like" evidence="2">
    <location>
        <begin position="260"/>
        <end position="402"/>
    </location>
</feature>
<feature type="region of interest" description="Zinc metallo-hydrolase">
    <location>
        <begin position="38"/>
        <end position="231"/>
    </location>
</feature>
<feature type="region of interest" description="Flavodoxin-reductase-like">
    <location>
        <begin position="421"/>
        <end position="570"/>
    </location>
</feature>
<feature type="strand" evidence="4">
    <location>
        <begin position="8"/>
        <end position="15"/>
    </location>
</feature>
<feature type="strand" evidence="4">
    <location>
        <begin position="18"/>
        <end position="27"/>
    </location>
</feature>
<feature type="strand" evidence="4">
    <location>
        <begin position="29"/>
        <end position="32"/>
    </location>
</feature>
<feature type="helix" evidence="4">
    <location>
        <begin position="33"/>
        <end position="35"/>
    </location>
</feature>
<feature type="strand" evidence="4">
    <location>
        <begin position="41"/>
        <end position="56"/>
    </location>
</feature>
<feature type="helix" evidence="4">
    <location>
        <begin position="61"/>
        <end position="74"/>
    </location>
</feature>
<feature type="helix" evidence="4">
    <location>
        <begin position="77"/>
        <end position="79"/>
    </location>
</feature>
<feature type="strand" evidence="4">
    <location>
        <begin position="80"/>
        <end position="84"/>
    </location>
</feature>
<feature type="helix" evidence="4">
    <location>
        <begin position="90"/>
        <end position="92"/>
    </location>
</feature>
<feature type="helix" evidence="4">
    <location>
        <begin position="93"/>
        <end position="102"/>
    </location>
</feature>
<feature type="strand" evidence="4">
    <location>
        <begin position="107"/>
        <end position="111"/>
    </location>
</feature>
<feature type="helix" evidence="4">
    <location>
        <begin position="112"/>
        <end position="121"/>
    </location>
</feature>
<feature type="strand" evidence="4">
    <location>
        <begin position="129"/>
        <end position="132"/>
    </location>
</feature>
<feature type="strand" evidence="4">
    <location>
        <begin position="145"/>
        <end position="150"/>
    </location>
</feature>
<feature type="strand" evidence="4">
    <location>
        <begin position="160"/>
        <end position="164"/>
    </location>
</feature>
<feature type="turn" evidence="4">
    <location>
        <begin position="165"/>
        <end position="168"/>
    </location>
</feature>
<feature type="strand" evidence="4">
    <location>
        <begin position="169"/>
        <end position="173"/>
    </location>
</feature>
<feature type="turn" evidence="4">
    <location>
        <begin position="174"/>
        <end position="176"/>
    </location>
</feature>
<feature type="helix" evidence="4">
    <location>
        <begin position="194"/>
        <end position="204"/>
    </location>
</feature>
<feature type="helix" evidence="4">
    <location>
        <begin position="206"/>
        <end position="208"/>
    </location>
</feature>
<feature type="helix" evidence="4">
    <location>
        <begin position="209"/>
        <end position="219"/>
    </location>
</feature>
<feature type="strand" evidence="4">
    <location>
        <begin position="225"/>
        <end position="236"/>
    </location>
</feature>
<feature type="helix" evidence="4">
    <location>
        <begin position="239"/>
        <end position="254"/>
    </location>
</feature>
<evidence type="ECO:0000250" key="1"/>
<evidence type="ECO:0000255" key="2">
    <source>
        <dbReference type="PROSITE-ProRule" id="PRU00088"/>
    </source>
</evidence>
<evidence type="ECO:0000305" key="3"/>
<evidence type="ECO:0007829" key="4">
    <source>
        <dbReference type="PDB" id="4FEK"/>
    </source>
</evidence>
<reference key="1">
    <citation type="journal article" date="2001" name="DNA Res.">
        <title>Complete genomic sequence of the filamentous nitrogen-fixing cyanobacterium Anabaena sp. strain PCC 7120.</title>
        <authorList>
            <person name="Kaneko T."/>
            <person name="Nakamura Y."/>
            <person name="Wolk C.P."/>
            <person name="Kuritz T."/>
            <person name="Sasamoto S."/>
            <person name="Watanabe A."/>
            <person name="Iriguchi M."/>
            <person name="Ishikawa A."/>
            <person name="Kawashima K."/>
            <person name="Kimura T."/>
            <person name="Kishida Y."/>
            <person name="Kohara M."/>
            <person name="Matsumoto M."/>
            <person name="Matsuno A."/>
            <person name="Muraki A."/>
            <person name="Nakazaki N."/>
            <person name="Shimpo S."/>
            <person name="Sugimoto M."/>
            <person name="Takazawa M."/>
            <person name="Yamada M."/>
            <person name="Yasuda M."/>
            <person name="Tabata S."/>
        </authorList>
    </citation>
    <scope>NUCLEOTIDE SEQUENCE [LARGE SCALE GENOMIC DNA]</scope>
    <source>
        <strain>PCC 7120 / SAG 25.82 / UTEX 2576</strain>
    </source>
</reference>